<feature type="chain" id="PRO_0000442168" description="O-methyltransferase kntB">
    <location>
        <begin position="1"/>
        <end position="413"/>
    </location>
</feature>
<feature type="active site" description="Proton acceptor" evidence="2">
    <location>
        <position position="322"/>
    </location>
</feature>
<feature type="binding site" evidence="1">
    <location>
        <begin position="255"/>
        <end position="256"/>
    </location>
    <ligand>
        <name>S-adenosyl-L-methionine</name>
        <dbReference type="ChEBI" id="CHEBI:59789"/>
    </ligand>
</feature>
<feature type="binding site" evidence="2">
    <location>
        <position position="280"/>
    </location>
    <ligand>
        <name>S-adenosyl-L-methionine</name>
        <dbReference type="ChEBI" id="CHEBI:59789"/>
    </ligand>
</feature>
<feature type="binding site" evidence="1">
    <location>
        <begin position="302"/>
        <end position="303"/>
    </location>
    <ligand>
        <name>S-adenosyl-L-methionine</name>
        <dbReference type="ChEBI" id="CHEBI:59789"/>
    </ligand>
</feature>
<feature type="binding site" evidence="2">
    <location>
        <position position="319"/>
    </location>
    <ligand>
        <name>S-adenosyl-L-methionine</name>
        <dbReference type="ChEBI" id="CHEBI:59789"/>
    </ligand>
</feature>
<comment type="function">
    <text evidence="3 4 5">Non-reducing polyketide synthase; part of the gene cluster that mediates the biosynthesis of the bicoumarin kotanin (PubMed:22945023, PubMed:26389790). The non-reducing polyketide synthase ktnS first catalyzes the formation of the pentaketidic 4,7-dihydroxy-5-methylcoumarin from acetyl coenzyme A and 4 malonyl coenzyme A molecules (PubMed:17315249, PubMed:22945023). Further O-methylation by ktnB leads to the formation of 7-demethylsiderin (PubMed:17315249, PubMed:22945023, PubMed:26389790). Then, an oxidative phenol coupling catalyzed by the cytochrome P450 monooxygenase ktnC forms the 8,8'-dimer P-orlandin via dimerization the monomeric precursor, 7-demethylsiderin (PubMed:26389790). P-orlandin is subsequently O-methylated in a stepwise fashion to demethylkotanin and kotanin (PubMed:22945023).</text>
</comment>
<comment type="cofactor">
    <cofactor evidence="7">
        <name>S-adenosyl-L-methionine</name>
        <dbReference type="ChEBI" id="CHEBI:59789"/>
    </cofactor>
</comment>
<comment type="pathway">
    <text evidence="4">Secondary metabolite biosynthesis.</text>
</comment>
<comment type="disruption phenotype">
    <text evidence="4">Leads to complete loss in coumarin biosynthesis (PubMed:22945023).</text>
</comment>
<comment type="similarity">
    <text evidence="2">Belongs to the class I-like SAM-binding methyltransferase superfamily. Cation-independent O-methyltransferase family.</text>
</comment>
<protein>
    <recommendedName>
        <fullName evidence="6">O-methyltransferase kntB</fullName>
        <ecNumber evidence="8">2.1.1.-</ecNumber>
    </recommendedName>
    <alternativeName>
        <fullName evidence="6">Kotanin biosynthesis cluster protein B</fullName>
    </alternativeName>
</protein>
<keyword id="KW-0489">Methyltransferase</keyword>
<keyword id="KW-1185">Reference proteome</keyword>
<keyword id="KW-0949">S-adenosyl-L-methionine</keyword>
<keyword id="KW-0808">Transferase</keyword>
<proteinExistence type="inferred from homology"/>
<organism>
    <name type="scientific">Aspergillus niger (strain ATCC MYA-4892 / CBS 513.88 / FGSC A1513)</name>
    <dbReference type="NCBI Taxonomy" id="425011"/>
    <lineage>
        <taxon>Eukaryota</taxon>
        <taxon>Fungi</taxon>
        <taxon>Dikarya</taxon>
        <taxon>Ascomycota</taxon>
        <taxon>Pezizomycotina</taxon>
        <taxon>Eurotiomycetes</taxon>
        <taxon>Eurotiomycetidae</taxon>
        <taxon>Eurotiales</taxon>
        <taxon>Aspergillaceae</taxon>
        <taxon>Aspergillus</taxon>
        <taxon>Aspergillus subgen. Circumdati</taxon>
    </lineage>
</organism>
<gene>
    <name evidence="6" type="primary">ktnB</name>
    <name type="ORF">An04g09520</name>
</gene>
<accession>A2QK65</accession>
<dbReference type="EC" id="2.1.1.-" evidence="8"/>
<dbReference type="EMBL" id="AM270096">
    <property type="protein sequence ID" value="CAK47959.1"/>
    <property type="molecule type" value="Genomic_DNA"/>
</dbReference>
<dbReference type="RefSeq" id="XP_001402308.1">
    <property type="nucleotide sequence ID" value="XM_001402271.1"/>
</dbReference>
<dbReference type="SMR" id="A2QK65"/>
<dbReference type="EnsemblFungi" id="CAK47959">
    <property type="protein sequence ID" value="CAK47959"/>
    <property type="gene ID" value="An04g09520"/>
</dbReference>
<dbReference type="GeneID" id="4991355"/>
<dbReference type="KEGG" id="ang:An04g09520"/>
<dbReference type="VEuPathDB" id="FungiDB:An04g09520"/>
<dbReference type="HOGENOM" id="CLU_005533_5_2_1"/>
<dbReference type="Proteomes" id="UP000006706">
    <property type="component" value="Chromosome 6L"/>
</dbReference>
<dbReference type="GO" id="GO:0008171">
    <property type="term" value="F:O-methyltransferase activity"/>
    <property type="evidence" value="ECO:0000315"/>
    <property type="project" value="UniProt"/>
</dbReference>
<dbReference type="GO" id="GO:0046983">
    <property type="term" value="F:protein dimerization activity"/>
    <property type="evidence" value="ECO:0007669"/>
    <property type="project" value="InterPro"/>
</dbReference>
<dbReference type="GO" id="GO:1900596">
    <property type="term" value="P:(+)-kotanin biosynthetic process"/>
    <property type="evidence" value="ECO:0000315"/>
    <property type="project" value="GO_Central"/>
</dbReference>
<dbReference type="GO" id="GO:0032259">
    <property type="term" value="P:methylation"/>
    <property type="evidence" value="ECO:0007669"/>
    <property type="project" value="UniProtKB-KW"/>
</dbReference>
<dbReference type="Gene3D" id="3.40.50.150">
    <property type="entry name" value="Vaccinia Virus protein VP39"/>
    <property type="match status" value="1"/>
</dbReference>
<dbReference type="Gene3D" id="1.10.10.10">
    <property type="entry name" value="Winged helix-like DNA-binding domain superfamily/Winged helix DNA-binding domain"/>
    <property type="match status" value="1"/>
</dbReference>
<dbReference type="InterPro" id="IPR016461">
    <property type="entry name" value="COMT-like"/>
</dbReference>
<dbReference type="InterPro" id="IPR001077">
    <property type="entry name" value="O_MeTrfase_dom"/>
</dbReference>
<dbReference type="InterPro" id="IPR012967">
    <property type="entry name" value="Plant_O-MeTrfase_dimerisation"/>
</dbReference>
<dbReference type="InterPro" id="IPR029063">
    <property type="entry name" value="SAM-dependent_MTases_sf"/>
</dbReference>
<dbReference type="InterPro" id="IPR036388">
    <property type="entry name" value="WH-like_DNA-bd_sf"/>
</dbReference>
<dbReference type="InterPro" id="IPR036390">
    <property type="entry name" value="WH_DNA-bd_sf"/>
</dbReference>
<dbReference type="PANTHER" id="PTHR43712:SF1">
    <property type="entry name" value="HYPOTHETICAL O-METHYLTRANSFERASE (EUROFUNG)-RELATED"/>
    <property type="match status" value="1"/>
</dbReference>
<dbReference type="PANTHER" id="PTHR43712">
    <property type="entry name" value="PUTATIVE (AFU_ORTHOLOGUE AFUA_4G14580)-RELATED"/>
    <property type="match status" value="1"/>
</dbReference>
<dbReference type="Pfam" id="PF08100">
    <property type="entry name" value="Dimerisation"/>
    <property type="match status" value="1"/>
</dbReference>
<dbReference type="Pfam" id="PF00891">
    <property type="entry name" value="Methyltransf_2"/>
    <property type="match status" value="1"/>
</dbReference>
<dbReference type="SUPFAM" id="SSF53335">
    <property type="entry name" value="S-adenosyl-L-methionine-dependent methyltransferases"/>
    <property type="match status" value="1"/>
</dbReference>
<dbReference type="SUPFAM" id="SSF46785">
    <property type="entry name" value="Winged helix' DNA-binding domain"/>
    <property type="match status" value="1"/>
</dbReference>
<dbReference type="PROSITE" id="PS51683">
    <property type="entry name" value="SAM_OMT_II"/>
    <property type="match status" value="1"/>
</dbReference>
<name>KTNB_ASPNC</name>
<sequence>MTYPEEIDEYSLIQNGLKSLNEAAQRCQQTKHSSQDSSIEGCSARQSARDELVLEALKFLQIAQGPIDAAATCYERTAHLASVRALLEMGVFEALPTGRVSRRTEELARELNVDESLLARLLRNSSLYGPFEETGPGQYRHTPFSEAYLRPEIRGMFRFAMDDHMPAHLKLHEFLQRNGWQEPSSTTDNPYTYAHKTNGKSMFDNLSEKPERMKAFNNGMTVQAMTPLWMIDLFPWRSLAQLKPTAGQVLAVDIGGGKGKAISRIRSFCNGLPGRYILQDQEHVVKSVEGSLDPSIERMAYNFFTEQPIRGAVTYLIRRCLHNWPQDSVVCILQNIAAAMEPGKSRLLIEEIVVPAEKAGVEEGWMDMIMMSLGAKQRTLKEWEMVLGLAGLEVKKVYQIPGNCHGLIEAWLK</sequence>
<reference key="1">
    <citation type="journal article" date="2007" name="Nat. Biotechnol.">
        <title>Genome sequencing and analysis of the versatile cell factory Aspergillus niger CBS 513.88.</title>
        <authorList>
            <person name="Pel H.J."/>
            <person name="de Winde J.H."/>
            <person name="Archer D.B."/>
            <person name="Dyer P.S."/>
            <person name="Hofmann G."/>
            <person name="Schaap P.J."/>
            <person name="Turner G."/>
            <person name="de Vries R.P."/>
            <person name="Albang R."/>
            <person name="Albermann K."/>
            <person name="Andersen M.R."/>
            <person name="Bendtsen J.D."/>
            <person name="Benen J.A.E."/>
            <person name="van den Berg M."/>
            <person name="Breestraat S."/>
            <person name="Caddick M.X."/>
            <person name="Contreras R."/>
            <person name="Cornell M."/>
            <person name="Coutinho P.M."/>
            <person name="Danchin E.G.J."/>
            <person name="Debets A.J.M."/>
            <person name="Dekker P."/>
            <person name="van Dijck P.W.M."/>
            <person name="van Dijk A."/>
            <person name="Dijkhuizen L."/>
            <person name="Driessen A.J.M."/>
            <person name="d'Enfert C."/>
            <person name="Geysens S."/>
            <person name="Goosen C."/>
            <person name="Groot G.S.P."/>
            <person name="de Groot P.W.J."/>
            <person name="Guillemette T."/>
            <person name="Henrissat B."/>
            <person name="Herweijer M."/>
            <person name="van den Hombergh J.P.T.W."/>
            <person name="van den Hondel C.A.M.J.J."/>
            <person name="van der Heijden R.T.J.M."/>
            <person name="van der Kaaij R.M."/>
            <person name="Klis F.M."/>
            <person name="Kools H.J."/>
            <person name="Kubicek C.P."/>
            <person name="van Kuyk P.A."/>
            <person name="Lauber J."/>
            <person name="Lu X."/>
            <person name="van der Maarel M.J.E.C."/>
            <person name="Meulenberg R."/>
            <person name="Menke H."/>
            <person name="Mortimer M.A."/>
            <person name="Nielsen J."/>
            <person name="Oliver S.G."/>
            <person name="Olsthoorn M."/>
            <person name="Pal K."/>
            <person name="van Peij N.N.M.E."/>
            <person name="Ram A.F.J."/>
            <person name="Rinas U."/>
            <person name="Roubos J.A."/>
            <person name="Sagt C.M.J."/>
            <person name="Schmoll M."/>
            <person name="Sun J."/>
            <person name="Ussery D."/>
            <person name="Varga J."/>
            <person name="Vervecken W."/>
            <person name="van de Vondervoort P.J.J."/>
            <person name="Wedler H."/>
            <person name="Woesten H.A.B."/>
            <person name="Zeng A.-P."/>
            <person name="van Ooyen A.J.J."/>
            <person name="Visser J."/>
            <person name="Stam H."/>
        </authorList>
    </citation>
    <scope>NUCLEOTIDE SEQUENCE [LARGE SCALE GENOMIC DNA]</scope>
    <source>
        <strain>ATCC MYA-4892 / CBS 513.88 / FGSC A1513</strain>
    </source>
</reference>
<reference key="2">
    <citation type="journal article" date="2007" name="ChemBioChem">
        <title>Regio- and stereoselective intermolecular oxidative phenol coupling in kotanin biosynthesis by Aspergillus niger.</title>
        <authorList>
            <person name="Huettel W."/>
            <person name="Mueller M."/>
        </authorList>
    </citation>
    <scope>FUNCTION</scope>
</reference>
<reference key="3">
    <citation type="journal article" date="2012" name="Angew. Chem. Int. Ed.">
        <title>Regio- and stereoselective oxidative phenol coupling in Aspergillus niger.</title>
        <authorList>
            <person name="Gil Girol C."/>
            <person name="Fisch K.M."/>
            <person name="Heinekamp T."/>
            <person name="Guenther S."/>
            <person name="Huettel W."/>
            <person name="Piel J."/>
            <person name="Brakhage A.A."/>
            <person name="Mueller M."/>
        </authorList>
    </citation>
    <scope>FUNCTION</scope>
    <scope>DISRUPTION PHENOTYPE</scope>
    <scope>PATHWAY</scope>
</reference>
<reference key="4">
    <citation type="journal article" date="2015" name="J. Am. Chem. Soc.">
        <title>Cytochrome P450-catalyzed regio- and stereoselective phenol coupling of fungal natural products.</title>
        <authorList>
            <person name="Mazzaferro L.S."/>
            <person name="Huettel W."/>
            <person name="Fries A."/>
            <person name="Mueller M."/>
        </authorList>
    </citation>
    <scope>FUNCTION</scope>
</reference>
<evidence type="ECO:0000250" key="1">
    <source>
        <dbReference type="UniProtKB" id="O04385"/>
    </source>
</evidence>
<evidence type="ECO:0000255" key="2">
    <source>
        <dbReference type="PROSITE-ProRule" id="PRU01020"/>
    </source>
</evidence>
<evidence type="ECO:0000269" key="3">
    <source>
    </source>
</evidence>
<evidence type="ECO:0000269" key="4">
    <source>
    </source>
</evidence>
<evidence type="ECO:0000269" key="5">
    <source>
    </source>
</evidence>
<evidence type="ECO:0000303" key="6">
    <source>
    </source>
</evidence>
<evidence type="ECO:0000305" key="7"/>
<evidence type="ECO:0000305" key="8">
    <source>
    </source>
</evidence>